<comment type="subunit">
    <text evidence="1">Interacts with the 40S ribosomal subunit.</text>
</comment>
<comment type="subcellular location">
    <subcellularLocation>
        <location evidence="1">Cytoplasm</location>
    </subcellularLocation>
</comment>
<comment type="domain">
    <text>The SUI1 domain may be involved in RNA binding.</text>
</comment>
<comment type="similarity">
    <text evidence="3">Belongs to the DENR family.</text>
</comment>
<organism>
    <name type="scientific">Cryptococcus neoformans var. neoformans serotype D (strain JEC21 / ATCC MYA-565)</name>
    <name type="common">Filobasidiella neoformans</name>
    <dbReference type="NCBI Taxonomy" id="214684"/>
    <lineage>
        <taxon>Eukaryota</taxon>
        <taxon>Fungi</taxon>
        <taxon>Dikarya</taxon>
        <taxon>Basidiomycota</taxon>
        <taxon>Agaricomycotina</taxon>
        <taxon>Tremellomycetes</taxon>
        <taxon>Tremellales</taxon>
        <taxon>Cryptococcaceae</taxon>
        <taxon>Cryptococcus</taxon>
        <taxon>Cryptococcus neoformans species complex</taxon>
    </lineage>
</organism>
<reference key="1">
    <citation type="journal article" date="2005" name="Science">
        <title>The genome of the basidiomycetous yeast and human pathogen Cryptococcus neoformans.</title>
        <authorList>
            <person name="Loftus B.J."/>
            <person name="Fung E."/>
            <person name="Roncaglia P."/>
            <person name="Rowley D."/>
            <person name="Amedeo P."/>
            <person name="Bruno D."/>
            <person name="Vamathevan J."/>
            <person name="Miranda M."/>
            <person name="Anderson I.J."/>
            <person name="Fraser J.A."/>
            <person name="Allen J.E."/>
            <person name="Bosdet I.E."/>
            <person name="Brent M.R."/>
            <person name="Chiu R."/>
            <person name="Doering T.L."/>
            <person name="Donlin M.J."/>
            <person name="D'Souza C.A."/>
            <person name="Fox D.S."/>
            <person name="Grinberg V."/>
            <person name="Fu J."/>
            <person name="Fukushima M."/>
            <person name="Haas B.J."/>
            <person name="Huang J.C."/>
            <person name="Janbon G."/>
            <person name="Jones S.J.M."/>
            <person name="Koo H.L."/>
            <person name="Krzywinski M.I."/>
            <person name="Kwon-Chung K.J."/>
            <person name="Lengeler K.B."/>
            <person name="Maiti R."/>
            <person name="Marra M.A."/>
            <person name="Marra R.E."/>
            <person name="Mathewson C.A."/>
            <person name="Mitchell T.G."/>
            <person name="Pertea M."/>
            <person name="Riggs F.R."/>
            <person name="Salzberg S.L."/>
            <person name="Schein J.E."/>
            <person name="Shvartsbeyn A."/>
            <person name="Shin H."/>
            <person name="Shumway M."/>
            <person name="Specht C.A."/>
            <person name="Suh B.B."/>
            <person name="Tenney A."/>
            <person name="Utterback T.R."/>
            <person name="Wickes B.L."/>
            <person name="Wortman J.R."/>
            <person name="Wye N.H."/>
            <person name="Kronstad J.W."/>
            <person name="Lodge J.K."/>
            <person name="Heitman J."/>
            <person name="Davis R.W."/>
            <person name="Fraser C.M."/>
            <person name="Hyman R.W."/>
        </authorList>
    </citation>
    <scope>NUCLEOTIDE SEQUENCE [LARGE SCALE GENOMIC DNA]</scope>
    <source>
        <strain>JEC21 / ATCC MYA-565</strain>
    </source>
</reference>
<gene>
    <name type="primary">TMA22</name>
    <name type="ordered locus">CNE00790</name>
</gene>
<protein>
    <recommendedName>
        <fullName>Translation machinery-associated protein 22</fullName>
    </recommendedName>
</protein>
<name>DENR_CRYNJ</name>
<feature type="chain" id="PRO_0000320441" description="Translation machinery-associated protein 22">
    <location>
        <begin position="1"/>
        <end position="198"/>
    </location>
</feature>
<feature type="domain" description="SUI1" evidence="2">
    <location>
        <begin position="100"/>
        <end position="171"/>
    </location>
</feature>
<proteinExistence type="inferred from homology"/>
<keyword id="KW-0963">Cytoplasm</keyword>
<keyword id="KW-1185">Reference proteome</keyword>
<keyword id="KW-0687">Ribonucleoprotein</keyword>
<keyword id="KW-0689">Ribosomal protein</keyword>
<dbReference type="EMBL" id="AE017345">
    <property type="protein sequence ID" value="AAW43497.1"/>
    <property type="molecule type" value="Genomic_DNA"/>
</dbReference>
<dbReference type="RefSeq" id="XP_570804.1">
    <property type="nucleotide sequence ID" value="XM_570804.1"/>
</dbReference>
<dbReference type="SMR" id="P0CR80"/>
<dbReference type="FunCoup" id="P0CR80">
    <property type="interactions" value="633"/>
</dbReference>
<dbReference type="STRING" id="214684.P0CR80"/>
<dbReference type="PaxDb" id="214684-P0CR80"/>
<dbReference type="EnsemblFungi" id="AAW43497">
    <property type="protein sequence ID" value="AAW43497"/>
    <property type="gene ID" value="CNE00790"/>
</dbReference>
<dbReference type="GeneID" id="3257733"/>
<dbReference type="KEGG" id="cne:CNE00790"/>
<dbReference type="VEuPathDB" id="FungiDB:CNE00790"/>
<dbReference type="eggNOG" id="KOG3239">
    <property type="taxonomic scope" value="Eukaryota"/>
</dbReference>
<dbReference type="HOGENOM" id="CLU_073511_0_1_1"/>
<dbReference type="InParanoid" id="P0CR80"/>
<dbReference type="OMA" id="EVFEIDM"/>
<dbReference type="OrthoDB" id="277199at2759"/>
<dbReference type="Proteomes" id="UP000002149">
    <property type="component" value="Chromosome 5"/>
</dbReference>
<dbReference type="GO" id="GO:0005737">
    <property type="term" value="C:cytoplasm"/>
    <property type="evidence" value="ECO:0007669"/>
    <property type="project" value="UniProtKB-SubCell"/>
</dbReference>
<dbReference type="GO" id="GO:1990904">
    <property type="term" value="C:ribonucleoprotein complex"/>
    <property type="evidence" value="ECO:0007669"/>
    <property type="project" value="UniProtKB-KW"/>
</dbReference>
<dbReference type="GO" id="GO:0005840">
    <property type="term" value="C:ribosome"/>
    <property type="evidence" value="ECO:0007669"/>
    <property type="project" value="UniProtKB-KW"/>
</dbReference>
<dbReference type="GO" id="GO:0003743">
    <property type="term" value="F:translation initiation factor activity"/>
    <property type="evidence" value="ECO:0007669"/>
    <property type="project" value="InterPro"/>
</dbReference>
<dbReference type="GO" id="GO:0001731">
    <property type="term" value="P:formation of translation preinitiation complex"/>
    <property type="evidence" value="ECO:0000318"/>
    <property type="project" value="GO_Central"/>
</dbReference>
<dbReference type="GO" id="GO:0000184">
    <property type="term" value="P:nuclear-transcribed mRNA catabolic process, nonsense-mediated decay"/>
    <property type="evidence" value="ECO:0007669"/>
    <property type="project" value="EnsemblFungi"/>
</dbReference>
<dbReference type="GO" id="GO:0032790">
    <property type="term" value="P:ribosome disassembly"/>
    <property type="evidence" value="ECO:0007669"/>
    <property type="project" value="EnsemblFungi"/>
</dbReference>
<dbReference type="GO" id="GO:0002188">
    <property type="term" value="P:translation reinitiation"/>
    <property type="evidence" value="ECO:0000318"/>
    <property type="project" value="GO_Central"/>
</dbReference>
<dbReference type="CDD" id="cd11607">
    <property type="entry name" value="DENR_C"/>
    <property type="match status" value="1"/>
</dbReference>
<dbReference type="FunFam" id="3.30.780.10:FF:000018">
    <property type="entry name" value="Translation machinery-associated protein 22"/>
    <property type="match status" value="1"/>
</dbReference>
<dbReference type="Gene3D" id="3.30.780.10">
    <property type="entry name" value="SUI1-like domain"/>
    <property type="match status" value="1"/>
</dbReference>
<dbReference type="InterPro" id="IPR050318">
    <property type="entry name" value="DENR/SUI1_TIF"/>
</dbReference>
<dbReference type="InterPro" id="IPR046447">
    <property type="entry name" value="DENR_C"/>
</dbReference>
<dbReference type="InterPro" id="IPR005873">
    <property type="entry name" value="DENR_eukaryotes"/>
</dbReference>
<dbReference type="InterPro" id="IPR048517">
    <property type="entry name" value="DENR_N"/>
</dbReference>
<dbReference type="InterPro" id="IPR001950">
    <property type="entry name" value="SUI1"/>
</dbReference>
<dbReference type="InterPro" id="IPR036877">
    <property type="entry name" value="SUI1_dom_sf"/>
</dbReference>
<dbReference type="NCBIfam" id="TIGR01159">
    <property type="entry name" value="DRP1"/>
    <property type="match status" value="1"/>
</dbReference>
<dbReference type="PANTHER" id="PTHR12789:SF0">
    <property type="entry name" value="DENSITY-REGULATED PROTEIN"/>
    <property type="match status" value="1"/>
</dbReference>
<dbReference type="PANTHER" id="PTHR12789">
    <property type="entry name" value="DENSITY-REGULATED PROTEIN HOMOLOG"/>
    <property type="match status" value="1"/>
</dbReference>
<dbReference type="Pfam" id="PF21023">
    <property type="entry name" value="DENR_N"/>
    <property type="match status" value="1"/>
</dbReference>
<dbReference type="Pfam" id="PF01253">
    <property type="entry name" value="SUI1"/>
    <property type="match status" value="1"/>
</dbReference>
<dbReference type="SUPFAM" id="SSF55159">
    <property type="entry name" value="eIF1-like"/>
    <property type="match status" value="1"/>
</dbReference>
<dbReference type="PROSITE" id="PS50296">
    <property type="entry name" value="SUI1"/>
    <property type="match status" value="1"/>
</dbReference>
<evidence type="ECO:0000250" key="1"/>
<evidence type="ECO:0000255" key="2">
    <source>
        <dbReference type="PROSITE-ProRule" id="PRU00200"/>
    </source>
</evidence>
<evidence type="ECO:0000305" key="3"/>
<sequence length="198" mass="21831">MASAVSGPSTKQVHPFYCAVCSLPTEYCEFGPSVSKCKAWLEEQDKDEYERVWGEGALASRIGTLSLDKQEKLEADAAKLEKKAAKKAEAEAKKKEQTKIIIKRSERTKRKHQTHIQNLELFGVDLKKAAKQFAGKFATGSSVSKTPQGEEEIVIQGDVGDEIVEMIRQQVGALKGVPADQITRVEVKKKKEAEEPAA</sequence>
<accession>P0CR80</accession>
<accession>Q55SW3</accession>
<accession>Q5KH97</accession>